<reference key="1">
    <citation type="journal article" date="2006" name="PLoS Biol.">
        <title>Metabolic complementarity and genomics of the dual bacterial symbiosis of sharpshooters.</title>
        <authorList>
            <person name="Wu D."/>
            <person name="Daugherty S.C."/>
            <person name="Van Aken S.E."/>
            <person name="Pai G.H."/>
            <person name="Watkins K.L."/>
            <person name="Khouri H."/>
            <person name="Tallon L.J."/>
            <person name="Zaborsky J.M."/>
            <person name="Dunbar H.E."/>
            <person name="Tran P.L."/>
            <person name="Moran N.A."/>
            <person name="Eisen J.A."/>
        </authorList>
    </citation>
    <scope>NUCLEOTIDE SEQUENCE [LARGE SCALE GENOMIC DNA]</scope>
</reference>
<feature type="chain" id="PRO_0000291059" description="UPF0434 protein BCI_0256">
    <location>
        <begin position="1"/>
        <end position="54"/>
    </location>
</feature>
<protein>
    <recommendedName>
        <fullName evidence="1">UPF0434 protein BCI_0256</fullName>
    </recommendedName>
</protein>
<name>Y256_BAUCH</name>
<keyword id="KW-1185">Reference proteome</keyword>
<proteinExistence type="inferred from homology"/>
<evidence type="ECO:0000255" key="1">
    <source>
        <dbReference type="HAMAP-Rule" id="MF_01187"/>
    </source>
</evidence>
<accession>Q1LTK8</accession>
<dbReference type="EMBL" id="CP000238">
    <property type="protein sequence ID" value="ABF13917.1"/>
    <property type="molecule type" value="Genomic_DNA"/>
</dbReference>
<dbReference type="RefSeq" id="WP_011520439.1">
    <property type="nucleotide sequence ID" value="NC_007984.1"/>
</dbReference>
<dbReference type="SMR" id="Q1LTK8"/>
<dbReference type="KEGG" id="bci:BCI_0256"/>
<dbReference type="HOGENOM" id="CLU_155659_3_0_6"/>
<dbReference type="Proteomes" id="UP000002427">
    <property type="component" value="Chromosome"/>
</dbReference>
<dbReference type="Gene3D" id="2.20.25.10">
    <property type="match status" value="1"/>
</dbReference>
<dbReference type="HAMAP" id="MF_01187">
    <property type="entry name" value="UPF0434"/>
    <property type="match status" value="1"/>
</dbReference>
<dbReference type="InterPro" id="IPR005651">
    <property type="entry name" value="Trm112-like"/>
</dbReference>
<dbReference type="Pfam" id="PF03966">
    <property type="entry name" value="Trm112p"/>
    <property type="match status" value="1"/>
</dbReference>
<dbReference type="SUPFAM" id="SSF158997">
    <property type="entry name" value="Trm112p-like"/>
    <property type="match status" value="1"/>
</dbReference>
<gene>
    <name type="ordered locus">BCI_0256</name>
</gene>
<organism>
    <name type="scientific">Baumannia cicadellinicola subsp. Homalodisca coagulata</name>
    <dbReference type="NCBI Taxonomy" id="374463"/>
    <lineage>
        <taxon>Bacteria</taxon>
        <taxon>Pseudomonadati</taxon>
        <taxon>Pseudomonadota</taxon>
        <taxon>Gammaproteobacteria</taxon>
        <taxon>Candidatus Palibaumannia</taxon>
    </lineage>
</organism>
<comment type="similarity">
    <text evidence="1">Belongs to the UPF0434 family.</text>
</comment>
<sequence>MEISLLNIIACPLCQGQLLLQEQELVCQIDALAYPVRTNIPVLLVSEARNILVK</sequence>